<organism>
    <name type="scientific">Vibrio parahaemolyticus serotype O3:K6 (strain RIMD 2210633)</name>
    <dbReference type="NCBI Taxonomy" id="223926"/>
    <lineage>
        <taxon>Bacteria</taxon>
        <taxon>Pseudomonadati</taxon>
        <taxon>Pseudomonadota</taxon>
        <taxon>Gammaproteobacteria</taxon>
        <taxon>Vibrionales</taxon>
        <taxon>Vibrionaceae</taxon>
        <taxon>Vibrio</taxon>
    </lineage>
</organism>
<proteinExistence type="inferred from homology"/>
<accession>P65129</accession>
<accession>Q9KRA5</accession>
<name>IF1_VIBPA</name>
<protein>
    <recommendedName>
        <fullName evidence="1">Translation initiation factor IF-1</fullName>
    </recommendedName>
</protein>
<comment type="function">
    <text evidence="1">One of the essential components for the initiation of protein synthesis. Stabilizes the binding of IF-2 and IF-3 on the 30S subunit to which N-formylmethionyl-tRNA(fMet) subsequently binds. Helps modulate mRNA selection, yielding the 30S pre-initiation complex (PIC). Upon addition of the 50S ribosomal subunit IF-1, IF-2 and IF-3 are released leaving the mature 70S translation initiation complex.</text>
</comment>
<comment type="subunit">
    <text evidence="1">Component of the 30S ribosomal translation pre-initiation complex which assembles on the 30S ribosome in the order IF-2 and IF-3, IF-1 and N-formylmethionyl-tRNA(fMet); mRNA recruitment can occur at any time during PIC assembly.</text>
</comment>
<comment type="subcellular location">
    <subcellularLocation>
        <location evidence="1">Cytoplasm</location>
    </subcellularLocation>
</comment>
<comment type="similarity">
    <text evidence="1">Belongs to the IF-1 family.</text>
</comment>
<dbReference type="EMBL" id="BA000031">
    <property type="protein sequence ID" value="BAC59279.1"/>
    <property type="molecule type" value="Genomic_DNA"/>
</dbReference>
<dbReference type="RefSeq" id="NP_797395.1">
    <property type="nucleotide sequence ID" value="NC_004603.1"/>
</dbReference>
<dbReference type="RefSeq" id="WP_001040192.1">
    <property type="nucleotide sequence ID" value="NC_004603.1"/>
</dbReference>
<dbReference type="SMR" id="P65129"/>
<dbReference type="GeneID" id="97540801"/>
<dbReference type="KEGG" id="vpa:VP1016"/>
<dbReference type="PATRIC" id="fig|223926.6.peg.963"/>
<dbReference type="eggNOG" id="COG0361">
    <property type="taxonomic scope" value="Bacteria"/>
</dbReference>
<dbReference type="HOGENOM" id="CLU_151267_1_0_6"/>
<dbReference type="PRO" id="PR:P65129"/>
<dbReference type="Proteomes" id="UP000002493">
    <property type="component" value="Chromosome 1"/>
</dbReference>
<dbReference type="GO" id="GO:0005829">
    <property type="term" value="C:cytosol"/>
    <property type="evidence" value="ECO:0007669"/>
    <property type="project" value="TreeGrafter"/>
</dbReference>
<dbReference type="GO" id="GO:0043022">
    <property type="term" value="F:ribosome binding"/>
    <property type="evidence" value="ECO:0007669"/>
    <property type="project" value="UniProtKB-UniRule"/>
</dbReference>
<dbReference type="GO" id="GO:0019843">
    <property type="term" value="F:rRNA binding"/>
    <property type="evidence" value="ECO:0007669"/>
    <property type="project" value="UniProtKB-UniRule"/>
</dbReference>
<dbReference type="GO" id="GO:0003743">
    <property type="term" value="F:translation initiation factor activity"/>
    <property type="evidence" value="ECO:0007669"/>
    <property type="project" value="UniProtKB-UniRule"/>
</dbReference>
<dbReference type="CDD" id="cd04451">
    <property type="entry name" value="S1_IF1"/>
    <property type="match status" value="1"/>
</dbReference>
<dbReference type="FunFam" id="2.40.50.140:FF:000002">
    <property type="entry name" value="Translation initiation factor IF-1"/>
    <property type="match status" value="1"/>
</dbReference>
<dbReference type="Gene3D" id="2.40.50.140">
    <property type="entry name" value="Nucleic acid-binding proteins"/>
    <property type="match status" value="1"/>
</dbReference>
<dbReference type="HAMAP" id="MF_00075">
    <property type="entry name" value="IF_1"/>
    <property type="match status" value="1"/>
</dbReference>
<dbReference type="InterPro" id="IPR012340">
    <property type="entry name" value="NA-bd_OB-fold"/>
</dbReference>
<dbReference type="InterPro" id="IPR006196">
    <property type="entry name" value="RNA-binding_domain_S1_IF1"/>
</dbReference>
<dbReference type="InterPro" id="IPR003029">
    <property type="entry name" value="S1_domain"/>
</dbReference>
<dbReference type="InterPro" id="IPR004368">
    <property type="entry name" value="TIF_IF1"/>
</dbReference>
<dbReference type="NCBIfam" id="TIGR00008">
    <property type="entry name" value="infA"/>
    <property type="match status" value="1"/>
</dbReference>
<dbReference type="PANTHER" id="PTHR33370">
    <property type="entry name" value="TRANSLATION INITIATION FACTOR IF-1, CHLOROPLASTIC"/>
    <property type="match status" value="1"/>
</dbReference>
<dbReference type="PANTHER" id="PTHR33370:SF1">
    <property type="entry name" value="TRANSLATION INITIATION FACTOR IF-1, CHLOROPLASTIC"/>
    <property type="match status" value="1"/>
</dbReference>
<dbReference type="Pfam" id="PF01176">
    <property type="entry name" value="eIF-1a"/>
    <property type="match status" value="1"/>
</dbReference>
<dbReference type="SMART" id="SM00316">
    <property type="entry name" value="S1"/>
    <property type="match status" value="1"/>
</dbReference>
<dbReference type="SUPFAM" id="SSF50249">
    <property type="entry name" value="Nucleic acid-binding proteins"/>
    <property type="match status" value="1"/>
</dbReference>
<dbReference type="PROSITE" id="PS50832">
    <property type="entry name" value="S1_IF1_TYPE"/>
    <property type="match status" value="1"/>
</dbReference>
<reference key="1">
    <citation type="journal article" date="2003" name="Lancet">
        <title>Genome sequence of Vibrio parahaemolyticus: a pathogenic mechanism distinct from that of V. cholerae.</title>
        <authorList>
            <person name="Makino K."/>
            <person name="Oshima K."/>
            <person name="Kurokawa K."/>
            <person name="Yokoyama K."/>
            <person name="Uda T."/>
            <person name="Tagomori K."/>
            <person name="Iijima Y."/>
            <person name="Najima M."/>
            <person name="Nakano M."/>
            <person name="Yamashita A."/>
            <person name="Kubota Y."/>
            <person name="Kimura S."/>
            <person name="Yasunaga T."/>
            <person name="Honda T."/>
            <person name="Shinagawa H."/>
            <person name="Hattori M."/>
            <person name="Iida T."/>
        </authorList>
    </citation>
    <scope>NUCLEOTIDE SEQUENCE [LARGE SCALE GENOMIC DNA]</scope>
    <source>
        <strain>RIMD 2210633</strain>
    </source>
</reference>
<feature type="chain" id="PRO_0000095903" description="Translation initiation factor IF-1">
    <location>
        <begin position="1"/>
        <end position="72"/>
    </location>
</feature>
<feature type="domain" description="S1-like" evidence="1">
    <location>
        <begin position="1"/>
        <end position="72"/>
    </location>
</feature>
<gene>
    <name evidence="1" type="primary">infA</name>
    <name type="ordered locus">VP1016</name>
</gene>
<evidence type="ECO:0000255" key="1">
    <source>
        <dbReference type="HAMAP-Rule" id="MF_00075"/>
    </source>
</evidence>
<keyword id="KW-0963">Cytoplasm</keyword>
<keyword id="KW-0396">Initiation factor</keyword>
<keyword id="KW-0648">Protein biosynthesis</keyword>
<keyword id="KW-0694">RNA-binding</keyword>
<keyword id="KW-0699">rRNA-binding</keyword>
<sequence>MAKEDVIEMQGTVLDTLPNTMFRVELENGHVVTAHISGKMRKNYIRILTGDKVTVEMTPYDLSKGRIVFRAR</sequence>